<organism>
    <name type="scientific">Saccharomyces cerevisiae (strain ATCC 204508 / S288c)</name>
    <name type="common">Baker's yeast</name>
    <dbReference type="NCBI Taxonomy" id="559292"/>
    <lineage>
        <taxon>Eukaryota</taxon>
        <taxon>Fungi</taxon>
        <taxon>Dikarya</taxon>
        <taxon>Ascomycota</taxon>
        <taxon>Saccharomycotina</taxon>
        <taxon>Saccharomycetes</taxon>
        <taxon>Saccharomycetales</taxon>
        <taxon>Saccharomycetaceae</taxon>
        <taxon>Saccharomyces</taxon>
    </lineage>
</organism>
<accession>P0C5E0</accession>
<evidence type="ECO:0000255" key="1"/>
<evidence type="ECO:0000305" key="2"/>
<evidence type="ECO:0000305" key="3">
    <source>
    </source>
</evidence>
<gene>
    <name type="ordered locus">YDR193W</name>
</gene>
<sequence length="132" mass="13746">MGALEPNAGAPNADGLAALLVFPKALIDVLPVLPVLVPNWGIPNAEVVVPPVIVFAVPKLGLPNALPPMLLVLAALFVKGLIPLVLERLGLAPDVNGLPKADITVESLLGSKFNDSLMSFCVKVQQFSVIVL</sequence>
<dbReference type="EMBL" id="Z48784">
    <property type="status" value="NOT_ANNOTATED_CDS"/>
    <property type="molecule type" value="Genomic_DNA"/>
</dbReference>
<dbReference type="PIR" id="S69753">
    <property type="entry name" value="S69753"/>
</dbReference>
<dbReference type="SMR" id="P0C5E0"/>
<dbReference type="STRING" id="4932.YDR193W"/>
<dbReference type="PaxDb" id="4932-YDR193W"/>
<dbReference type="EnsemblFungi" id="YDR193W_mRNA">
    <property type="protein sequence ID" value="YDR193W"/>
    <property type="gene ID" value="YDR193W"/>
</dbReference>
<dbReference type="AGR" id="SGD:S000002601"/>
<dbReference type="SGD" id="S000002601">
    <property type="gene designation" value="YDR193W"/>
</dbReference>
<dbReference type="HOGENOM" id="CLU_1918716_0_0_1"/>
<dbReference type="GO" id="GO:0016020">
    <property type="term" value="C:membrane"/>
    <property type="evidence" value="ECO:0007669"/>
    <property type="project" value="UniProtKB-SubCell"/>
</dbReference>
<reference key="1">
    <citation type="journal article" date="1997" name="Nature">
        <title>The nucleotide sequence of Saccharomyces cerevisiae chromosome IV.</title>
        <authorList>
            <person name="Jacq C."/>
            <person name="Alt-Moerbe J."/>
            <person name="Andre B."/>
            <person name="Arnold W."/>
            <person name="Bahr A."/>
            <person name="Ballesta J.P.G."/>
            <person name="Bargues M."/>
            <person name="Baron L."/>
            <person name="Becker A."/>
            <person name="Biteau N."/>
            <person name="Bloecker H."/>
            <person name="Blugeon C."/>
            <person name="Boskovic J."/>
            <person name="Brandt P."/>
            <person name="Brueckner M."/>
            <person name="Buitrago M.J."/>
            <person name="Coster F."/>
            <person name="Delaveau T."/>
            <person name="del Rey F."/>
            <person name="Dujon B."/>
            <person name="Eide L.G."/>
            <person name="Garcia-Cantalejo J.M."/>
            <person name="Goffeau A."/>
            <person name="Gomez-Peris A."/>
            <person name="Granotier C."/>
            <person name="Hanemann V."/>
            <person name="Hankeln T."/>
            <person name="Hoheisel J.D."/>
            <person name="Jaeger W."/>
            <person name="Jimenez A."/>
            <person name="Jonniaux J.-L."/>
            <person name="Kraemer C."/>
            <person name="Kuester H."/>
            <person name="Laamanen P."/>
            <person name="Legros Y."/>
            <person name="Louis E.J."/>
            <person name="Moeller-Rieker S."/>
            <person name="Monnet A."/>
            <person name="Moro M."/>
            <person name="Mueller-Auer S."/>
            <person name="Nussbaumer B."/>
            <person name="Paricio N."/>
            <person name="Paulin L."/>
            <person name="Perea J."/>
            <person name="Perez-Alonso M."/>
            <person name="Perez-Ortin J.E."/>
            <person name="Pohl T.M."/>
            <person name="Prydz H."/>
            <person name="Purnelle B."/>
            <person name="Rasmussen S.W."/>
            <person name="Remacha M.A."/>
            <person name="Revuelta J.L."/>
            <person name="Rieger M."/>
            <person name="Salom D."/>
            <person name="Saluz H.P."/>
            <person name="Saiz J.E."/>
            <person name="Saren A.-M."/>
            <person name="Schaefer M."/>
            <person name="Scharfe M."/>
            <person name="Schmidt E.R."/>
            <person name="Schneider C."/>
            <person name="Scholler P."/>
            <person name="Schwarz S."/>
            <person name="Soler-Mira A."/>
            <person name="Urrestarazu L.A."/>
            <person name="Verhasselt P."/>
            <person name="Vissers S."/>
            <person name="Voet M."/>
            <person name="Volckaert G."/>
            <person name="Wagner G."/>
            <person name="Wambutt R."/>
            <person name="Wedler E."/>
            <person name="Wedler H."/>
            <person name="Woelfl S."/>
            <person name="Harris D.E."/>
            <person name="Bowman S."/>
            <person name="Brown D."/>
            <person name="Churcher C.M."/>
            <person name="Connor R."/>
            <person name="Dedman K."/>
            <person name="Gentles S."/>
            <person name="Hamlin N."/>
            <person name="Hunt S."/>
            <person name="Jones L."/>
            <person name="McDonald S."/>
            <person name="Murphy L.D."/>
            <person name="Niblett D."/>
            <person name="Odell C."/>
            <person name="Oliver K."/>
            <person name="Rajandream M.A."/>
            <person name="Richards C."/>
            <person name="Shore L."/>
            <person name="Walsh S.V."/>
            <person name="Barrell B.G."/>
            <person name="Dietrich F.S."/>
            <person name="Mulligan J.T."/>
            <person name="Allen E."/>
            <person name="Araujo R."/>
            <person name="Aviles E."/>
            <person name="Berno A."/>
            <person name="Carpenter J."/>
            <person name="Chen E."/>
            <person name="Cherry J.M."/>
            <person name="Chung E."/>
            <person name="Duncan M."/>
            <person name="Hunicke-Smith S."/>
            <person name="Hyman R.W."/>
            <person name="Komp C."/>
            <person name="Lashkari D."/>
            <person name="Lew H."/>
            <person name="Lin D."/>
            <person name="Mosedale D."/>
            <person name="Nakahara K."/>
            <person name="Namath A."/>
            <person name="Oefner P."/>
            <person name="Oh C."/>
            <person name="Petel F.X."/>
            <person name="Roberts D."/>
            <person name="Schramm S."/>
            <person name="Schroeder M."/>
            <person name="Shogren T."/>
            <person name="Shroff N."/>
            <person name="Winant A."/>
            <person name="Yelton M.A."/>
            <person name="Botstein D."/>
            <person name="Davis R.W."/>
            <person name="Johnston M."/>
            <person name="Andrews S."/>
            <person name="Brinkman R."/>
            <person name="Cooper J."/>
            <person name="Ding H."/>
            <person name="Du Z."/>
            <person name="Favello A."/>
            <person name="Fulton L."/>
            <person name="Gattung S."/>
            <person name="Greco T."/>
            <person name="Hallsworth K."/>
            <person name="Hawkins J."/>
            <person name="Hillier L.W."/>
            <person name="Jier M."/>
            <person name="Johnson D."/>
            <person name="Johnston L."/>
            <person name="Kirsten J."/>
            <person name="Kucaba T."/>
            <person name="Langston Y."/>
            <person name="Latreille P."/>
            <person name="Le T."/>
            <person name="Mardis E."/>
            <person name="Menezes S."/>
            <person name="Miller N."/>
            <person name="Nhan M."/>
            <person name="Pauley A."/>
            <person name="Peluso D."/>
            <person name="Rifkin L."/>
            <person name="Riles L."/>
            <person name="Taich A."/>
            <person name="Trevaskis E."/>
            <person name="Vignati D."/>
            <person name="Wilcox L."/>
            <person name="Wohldman P."/>
            <person name="Vaudin M."/>
            <person name="Wilson R."/>
            <person name="Waterston R."/>
            <person name="Albermann K."/>
            <person name="Hani J."/>
            <person name="Heumann K."/>
            <person name="Kleine K."/>
            <person name="Mewes H.-W."/>
            <person name="Zollner A."/>
            <person name="Zaccaria P."/>
        </authorList>
    </citation>
    <scope>NUCLEOTIDE SEQUENCE [LARGE SCALE GENOMIC DNA]</scope>
    <source>
        <strain>ATCC 204508 / S288c</strain>
    </source>
</reference>
<reference key="2">
    <citation type="journal article" date="2014" name="G3 (Bethesda)">
        <title>The reference genome sequence of Saccharomyces cerevisiae: Then and now.</title>
        <authorList>
            <person name="Engel S.R."/>
            <person name="Dietrich F.S."/>
            <person name="Fisk D.G."/>
            <person name="Binkley G."/>
            <person name="Balakrishnan R."/>
            <person name="Costanzo M.C."/>
            <person name="Dwight S.S."/>
            <person name="Hitz B.C."/>
            <person name="Karra K."/>
            <person name="Nash R.S."/>
            <person name="Weng S."/>
            <person name="Wong E.D."/>
            <person name="Lloyd P."/>
            <person name="Skrzypek M.S."/>
            <person name="Miyasato S.R."/>
            <person name="Simison M."/>
            <person name="Cherry J.M."/>
        </authorList>
    </citation>
    <scope>GENOME REANNOTATION</scope>
    <source>
        <strain>ATCC 204508 / S288c</strain>
    </source>
</reference>
<protein>
    <recommendedName>
        <fullName>Putative uncharacterized protein YDR193W</fullName>
    </recommendedName>
</protein>
<name>YD193_YEAST</name>
<comment type="subcellular location">
    <subcellularLocation>
        <location evidence="2">Membrane</location>
        <topology evidence="2">Single-pass membrane protein</topology>
    </subcellularLocation>
</comment>
<comment type="miscellaneous">
    <text evidence="2">Partially overlaps NUP42.</text>
</comment>
<comment type="caution">
    <text evidence="3">Product of a dubious gene prediction unlikely to encode a functional protein. Because of that it is not part of the S.cerevisiae S288c complete/reference proteome set.</text>
</comment>
<keyword id="KW-0472">Membrane</keyword>
<keyword id="KW-0812">Transmembrane</keyword>
<keyword id="KW-1133">Transmembrane helix</keyword>
<proteinExistence type="uncertain"/>
<feature type="chain" id="PRO_0000302031" description="Putative uncharacterized protein YDR193W">
    <location>
        <begin position="1"/>
        <end position="132"/>
    </location>
</feature>
<feature type="transmembrane region" description="Helical" evidence="1">
    <location>
        <begin position="66"/>
        <end position="86"/>
    </location>
</feature>